<accession>P21058</accession>
<comment type="function">
    <text evidence="1">Mildly affects the expression of MHC class II molecules on the surface of host antigen presenting cells (APCs).</text>
</comment>
<comment type="subcellular location">
    <subcellularLocation>
        <location evidence="1">Host endosome</location>
    </subcellularLocation>
</comment>
<comment type="induction">
    <text>Expressed in the early phase of the viral replicative cycle.</text>
</comment>
<comment type="similarity">
    <text evidence="3">Belongs to the orthopoxvirus OPG163 family.</text>
</comment>
<sequence>MDAAFVITPMGVLTITDTLYDDLDISIMDFIGPYIIGNIKTVQIDVRDIKYSDMQKCYFSYKGKIVPQDSNDLARFNIYSICAAYRSKNTIIIACDYDIMLDIEDKHQPFYLFPSIDVFNATIIEAYNLYTAGDYHLIINPSDNLKMKLSFNSSFCISDGNGWIIIDGKCNSNFLS</sequence>
<name>PG163_VACCC</name>
<reference key="1">
    <citation type="journal article" date="1990" name="Virology">
        <title>The complete DNA sequence of vaccinia virus.</title>
        <authorList>
            <person name="Goebel S.J."/>
            <person name="Johnson G.P."/>
            <person name="Perkus M.E."/>
            <person name="Davis S.W."/>
            <person name="Winslow J.P."/>
            <person name="Paoletti E."/>
        </authorList>
    </citation>
    <scope>NUCLEOTIDE SEQUENCE [LARGE SCALE GENOMIC DNA]</scope>
</reference>
<reference key="2">
    <citation type="journal article" date="1990" name="Virology">
        <title>Appendix to 'The complete DNA sequence of vaccinia virus'.</title>
        <authorList>
            <person name="Goebel S.J."/>
            <person name="Johnson G.P."/>
            <person name="Perkus M.E."/>
            <person name="Davis S.W."/>
            <person name="Winslow J.P."/>
            <person name="Paoletti E."/>
        </authorList>
    </citation>
    <scope>NUCLEOTIDE SEQUENCE [LARGE SCALE GENOMIC DNA]</scope>
</reference>
<organismHost>
    <name type="scientific">Homo sapiens</name>
    <name type="common">Human</name>
    <dbReference type="NCBI Taxonomy" id="9606"/>
</organismHost>
<protein>
    <recommendedName>
        <fullName>Protein OPG163</fullName>
    </recommendedName>
</protein>
<gene>
    <name type="primary">OPG163</name>
    <name type="ORF">A35R</name>
</gene>
<dbReference type="EMBL" id="M35027">
    <property type="protein sequence ID" value="AAA48163.1"/>
    <property type="molecule type" value="Genomic_DNA"/>
</dbReference>
<dbReference type="PIR" id="A42521">
    <property type="entry name" value="A42521"/>
</dbReference>
<dbReference type="Proteomes" id="UP000008269">
    <property type="component" value="Segment"/>
</dbReference>
<dbReference type="GO" id="GO:0044174">
    <property type="term" value="C:host cell endosome"/>
    <property type="evidence" value="ECO:0007669"/>
    <property type="project" value="UniProtKB-SubCell"/>
</dbReference>
<dbReference type="GO" id="GO:0039505">
    <property type="term" value="P:symbiont-mediated suppression of host antigen processing and presentation of peptide antigen via MHC class II"/>
    <property type="evidence" value="ECO:0007669"/>
    <property type="project" value="UniProtKB-KW"/>
</dbReference>
<dbReference type="InterPro" id="IPR009247">
    <property type="entry name" value="Chordopox_A35R"/>
</dbReference>
<dbReference type="Pfam" id="PF05989">
    <property type="entry name" value="Chordopox_A35R"/>
    <property type="match status" value="1"/>
</dbReference>
<keyword id="KW-1039">Host endosome</keyword>
<keyword id="KW-0945">Host-virus interaction</keyword>
<keyword id="KW-1080">Inhibition of host adaptive immune response by virus</keyword>
<keyword id="KW-1116">Inhibition of host MHC class II molecule presentation by virus</keyword>
<keyword id="KW-1185">Reference proteome</keyword>
<keyword id="KW-0732">Signal</keyword>
<keyword id="KW-0899">Viral immunoevasion</keyword>
<proteinExistence type="evidence at transcript level"/>
<organism>
    <name type="scientific">Vaccinia virus (strain Copenhagen)</name>
    <name type="common">VACV</name>
    <dbReference type="NCBI Taxonomy" id="10249"/>
    <lineage>
        <taxon>Viruses</taxon>
        <taxon>Varidnaviria</taxon>
        <taxon>Bamfordvirae</taxon>
        <taxon>Nucleocytoviricota</taxon>
        <taxon>Pokkesviricetes</taxon>
        <taxon>Chitovirales</taxon>
        <taxon>Poxviridae</taxon>
        <taxon>Chordopoxvirinae</taxon>
        <taxon>Orthopoxvirus</taxon>
        <taxon>Vaccinia virus</taxon>
    </lineage>
</organism>
<evidence type="ECO:0000250" key="1">
    <source>
        <dbReference type="UniProtKB" id="Q01232"/>
    </source>
</evidence>
<evidence type="ECO:0000255" key="2"/>
<evidence type="ECO:0000305" key="3"/>
<feature type="signal peptide" evidence="2">
    <location>
        <begin position="1"/>
        <end position="14"/>
    </location>
</feature>
<feature type="chain" id="PRO_0000040597" description="Protein OPG163">
    <location>
        <begin position="15"/>
        <end position="176"/>
    </location>
</feature>